<name>RS16_MYCTO</name>
<feature type="chain" id="PRO_0000428247" description="Small ribosomal subunit protein bS16">
    <location>
        <begin position="1"/>
        <end position="162"/>
    </location>
</feature>
<feature type="region of interest" description="Disordered" evidence="2">
    <location>
        <begin position="113"/>
        <end position="162"/>
    </location>
</feature>
<feature type="compositionally biased region" description="Basic residues" evidence="2">
    <location>
        <begin position="124"/>
        <end position="134"/>
    </location>
</feature>
<proteinExistence type="inferred from homology"/>
<dbReference type="EMBL" id="AE000516">
    <property type="protein sequence ID" value="AAK47303.1"/>
    <property type="molecule type" value="Genomic_DNA"/>
</dbReference>
<dbReference type="PIR" id="H70927">
    <property type="entry name" value="H70927"/>
</dbReference>
<dbReference type="RefSeq" id="WP_003414731.1">
    <property type="nucleotide sequence ID" value="NZ_KK341227.1"/>
</dbReference>
<dbReference type="SMR" id="P9WH52"/>
<dbReference type="GeneID" id="45426896"/>
<dbReference type="KEGG" id="mtc:MT2977"/>
<dbReference type="PATRIC" id="fig|83331.31.peg.3217"/>
<dbReference type="HOGENOM" id="CLU_100590_1_1_11"/>
<dbReference type="Proteomes" id="UP000001020">
    <property type="component" value="Chromosome"/>
</dbReference>
<dbReference type="GO" id="GO:0005737">
    <property type="term" value="C:cytoplasm"/>
    <property type="evidence" value="ECO:0007669"/>
    <property type="project" value="UniProtKB-ARBA"/>
</dbReference>
<dbReference type="GO" id="GO:0015935">
    <property type="term" value="C:small ribosomal subunit"/>
    <property type="evidence" value="ECO:0007669"/>
    <property type="project" value="TreeGrafter"/>
</dbReference>
<dbReference type="GO" id="GO:0003735">
    <property type="term" value="F:structural constituent of ribosome"/>
    <property type="evidence" value="ECO:0007669"/>
    <property type="project" value="InterPro"/>
</dbReference>
<dbReference type="GO" id="GO:0006412">
    <property type="term" value="P:translation"/>
    <property type="evidence" value="ECO:0007669"/>
    <property type="project" value="UniProtKB-UniRule"/>
</dbReference>
<dbReference type="FunFam" id="3.30.1320.10:FF:000009">
    <property type="entry name" value="30S ribosomal protein S16"/>
    <property type="match status" value="1"/>
</dbReference>
<dbReference type="Gene3D" id="3.30.1320.10">
    <property type="match status" value="1"/>
</dbReference>
<dbReference type="HAMAP" id="MF_00385">
    <property type="entry name" value="Ribosomal_bS16"/>
    <property type="match status" value="1"/>
</dbReference>
<dbReference type="InterPro" id="IPR000307">
    <property type="entry name" value="Ribosomal_bS16"/>
</dbReference>
<dbReference type="InterPro" id="IPR020592">
    <property type="entry name" value="Ribosomal_bS16_CS"/>
</dbReference>
<dbReference type="InterPro" id="IPR023803">
    <property type="entry name" value="Ribosomal_bS16_dom_sf"/>
</dbReference>
<dbReference type="NCBIfam" id="NF011093">
    <property type="entry name" value="PRK14520.1"/>
    <property type="match status" value="1"/>
</dbReference>
<dbReference type="NCBIfam" id="TIGR00002">
    <property type="entry name" value="S16"/>
    <property type="match status" value="1"/>
</dbReference>
<dbReference type="PANTHER" id="PTHR12919">
    <property type="entry name" value="30S RIBOSOMAL PROTEIN S16"/>
    <property type="match status" value="1"/>
</dbReference>
<dbReference type="PANTHER" id="PTHR12919:SF20">
    <property type="entry name" value="SMALL RIBOSOMAL SUBUNIT PROTEIN BS16M"/>
    <property type="match status" value="1"/>
</dbReference>
<dbReference type="Pfam" id="PF00886">
    <property type="entry name" value="Ribosomal_S16"/>
    <property type="match status" value="1"/>
</dbReference>
<dbReference type="SUPFAM" id="SSF54565">
    <property type="entry name" value="Ribosomal protein S16"/>
    <property type="match status" value="1"/>
</dbReference>
<dbReference type="PROSITE" id="PS00732">
    <property type="entry name" value="RIBOSOMAL_S16"/>
    <property type="match status" value="1"/>
</dbReference>
<accession>P9WH52</accession>
<accession>L0TB82</accession>
<accession>P66435</accession>
<accession>Q10795</accession>
<organism>
    <name type="scientific">Mycobacterium tuberculosis (strain CDC 1551 / Oshkosh)</name>
    <dbReference type="NCBI Taxonomy" id="83331"/>
    <lineage>
        <taxon>Bacteria</taxon>
        <taxon>Bacillati</taxon>
        <taxon>Actinomycetota</taxon>
        <taxon>Actinomycetes</taxon>
        <taxon>Mycobacteriales</taxon>
        <taxon>Mycobacteriaceae</taxon>
        <taxon>Mycobacterium</taxon>
        <taxon>Mycobacterium tuberculosis complex</taxon>
    </lineage>
</organism>
<keyword id="KW-1185">Reference proteome</keyword>
<keyword id="KW-0687">Ribonucleoprotein</keyword>
<keyword id="KW-0689">Ribosomal protein</keyword>
<gene>
    <name evidence="1" type="primary">rpsP</name>
    <name type="ordered locus">MT2977</name>
</gene>
<sequence>MAVKIKLTRLGKIRNPQYRVAVADARTRRDGRAIEVIGRYHPKEEPSLIEINSERAQYWLSVGAQPTEPVLKLLKITGDWQKFKGLPGAQGRLKVAAPKPSKLEVFNAALAAADGGPTTEATKPKKKSPAKKAAKAAEPAPQPEQPDTPALGGEQAELTAES</sequence>
<comment type="similarity">
    <text evidence="1">Belongs to the bacterial ribosomal protein bS16 family.</text>
</comment>
<evidence type="ECO:0000255" key="1">
    <source>
        <dbReference type="HAMAP-Rule" id="MF_00385"/>
    </source>
</evidence>
<evidence type="ECO:0000256" key="2">
    <source>
        <dbReference type="SAM" id="MobiDB-lite"/>
    </source>
</evidence>
<evidence type="ECO:0000305" key="3"/>
<reference key="1">
    <citation type="journal article" date="2002" name="J. Bacteriol.">
        <title>Whole-genome comparison of Mycobacterium tuberculosis clinical and laboratory strains.</title>
        <authorList>
            <person name="Fleischmann R.D."/>
            <person name="Alland D."/>
            <person name="Eisen J.A."/>
            <person name="Carpenter L."/>
            <person name="White O."/>
            <person name="Peterson J.D."/>
            <person name="DeBoy R.T."/>
            <person name="Dodson R.J."/>
            <person name="Gwinn M.L."/>
            <person name="Haft D.H."/>
            <person name="Hickey E.K."/>
            <person name="Kolonay J.F."/>
            <person name="Nelson W.C."/>
            <person name="Umayam L.A."/>
            <person name="Ermolaeva M.D."/>
            <person name="Salzberg S.L."/>
            <person name="Delcher A."/>
            <person name="Utterback T.R."/>
            <person name="Weidman J.F."/>
            <person name="Khouri H.M."/>
            <person name="Gill J."/>
            <person name="Mikula A."/>
            <person name="Bishai W."/>
            <person name="Jacobs W.R. Jr."/>
            <person name="Venter J.C."/>
            <person name="Fraser C.M."/>
        </authorList>
    </citation>
    <scope>NUCLEOTIDE SEQUENCE [LARGE SCALE GENOMIC DNA]</scope>
    <source>
        <strain>CDC 1551 / Oshkosh</strain>
    </source>
</reference>
<protein>
    <recommendedName>
        <fullName evidence="1">Small ribosomal subunit protein bS16</fullName>
    </recommendedName>
    <alternativeName>
        <fullName evidence="3">30S ribosomal protein S16</fullName>
    </alternativeName>
</protein>